<name>PROA_MANSM</name>
<organism>
    <name type="scientific">Mannheimia succiniciproducens (strain KCTC 0769BP / MBEL55E)</name>
    <dbReference type="NCBI Taxonomy" id="221988"/>
    <lineage>
        <taxon>Bacteria</taxon>
        <taxon>Pseudomonadati</taxon>
        <taxon>Pseudomonadota</taxon>
        <taxon>Gammaproteobacteria</taxon>
        <taxon>Pasteurellales</taxon>
        <taxon>Pasteurellaceae</taxon>
        <taxon>Basfia</taxon>
    </lineage>
</organism>
<feature type="chain" id="PRO_0000189747" description="Gamma-glutamyl phosphate reductase">
    <location>
        <begin position="1"/>
        <end position="419"/>
    </location>
</feature>
<evidence type="ECO:0000255" key="1">
    <source>
        <dbReference type="HAMAP-Rule" id="MF_00412"/>
    </source>
</evidence>
<keyword id="KW-0028">Amino-acid biosynthesis</keyword>
<keyword id="KW-0963">Cytoplasm</keyword>
<keyword id="KW-0521">NADP</keyword>
<keyword id="KW-0560">Oxidoreductase</keyword>
<keyword id="KW-0641">Proline biosynthesis</keyword>
<proteinExistence type="inferred from homology"/>
<dbReference type="EC" id="1.2.1.41" evidence="1"/>
<dbReference type="EMBL" id="AE016827">
    <property type="protein sequence ID" value="AAU38211.1"/>
    <property type="molecule type" value="Genomic_DNA"/>
</dbReference>
<dbReference type="RefSeq" id="WP_011200772.1">
    <property type="nucleotide sequence ID" value="NC_006300.1"/>
</dbReference>
<dbReference type="SMR" id="Q65S49"/>
<dbReference type="STRING" id="221988.MS1604"/>
<dbReference type="KEGG" id="msu:MS1604"/>
<dbReference type="eggNOG" id="COG0014">
    <property type="taxonomic scope" value="Bacteria"/>
</dbReference>
<dbReference type="HOGENOM" id="CLU_030231_0_0_6"/>
<dbReference type="OrthoDB" id="9809970at2"/>
<dbReference type="UniPathway" id="UPA00098">
    <property type="reaction ID" value="UER00360"/>
</dbReference>
<dbReference type="Proteomes" id="UP000000607">
    <property type="component" value="Chromosome"/>
</dbReference>
<dbReference type="GO" id="GO:0005737">
    <property type="term" value="C:cytoplasm"/>
    <property type="evidence" value="ECO:0007669"/>
    <property type="project" value="UniProtKB-SubCell"/>
</dbReference>
<dbReference type="GO" id="GO:0004350">
    <property type="term" value="F:glutamate-5-semialdehyde dehydrogenase activity"/>
    <property type="evidence" value="ECO:0007669"/>
    <property type="project" value="UniProtKB-UniRule"/>
</dbReference>
<dbReference type="GO" id="GO:0050661">
    <property type="term" value="F:NADP binding"/>
    <property type="evidence" value="ECO:0007669"/>
    <property type="project" value="InterPro"/>
</dbReference>
<dbReference type="GO" id="GO:0055129">
    <property type="term" value="P:L-proline biosynthetic process"/>
    <property type="evidence" value="ECO:0007669"/>
    <property type="project" value="UniProtKB-UniRule"/>
</dbReference>
<dbReference type="CDD" id="cd07079">
    <property type="entry name" value="ALDH_F18-19_ProA-GPR"/>
    <property type="match status" value="1"/>
</dbReference>
<dbReference type="FunFam" id="3.40.309.10:FF:000006">
    <property type="entry name" value="Gamma-glutamyl phosphate reductase"/>
    <property type="match status" value="1"/>
</dbReference>
<dbReference type="Gene3D" id="3.40.605.10">
    <property type="entry name" value="Aldehyde Dehydrogenase, Chain A, domain 1"/>
    <property type="match status" value="1"/>
</dbReference>
<dbReference type="Gene3D" id="3.40.309.10">
    <property type="entry name" value="Aldehyde Dehydrogenase, Chain A, domain 2"/>
    <property type="match status" value="1"/>
</dbReference>
<dbReference type="HAMAP" id="MF_00412">
    <property type="entry name" value="ProA"/>
    <property type="match status" value="1"/>
</dbReference>
<dbReference type="InterPro" id="IPR016161">
    <property type="entry name" value="Ald_DH/histidinol_DH"/>
</dbReference>
<dbReference type="InterPro" id="IPR016163">
    <property type="entry name" value="Ald_DH_C"/>
</dbReference>
<dbReference type="InterPro" id="IPR016162">
    <property type="entry name" value="Ald_DH_N"/>
</dbReference>
<dbReference type="InterPro" id="IPR015590">
    <property type="entry name" value="Aldehyde_DH_dom"/>
</dbReference>
<dbReference type="InterPro" id="IPR020593">
    <property type="entry name" value="G-glutamylP_reductase_CS"/>
</dbReference>
<dbReference type="InterPro" id="IPR012134">
    <property type="entry name" value="Glu-5-SA_DH"/>
</dbReference>
<dbReference type="InterPro" id="IPR000965">
    <property type="entry name" value="GPR_dom"/>
</dbReference>
<dbReference type="NCBIfam" id="NF001221">
    <property type="entry name" value="PRK00197.1"/>
    <property type="match status" value="1"/>
</dbReference>
<dbReference type="NCBIfam" id="TIGR00407">
    <property type="entry name" value="proA"/>
    <property type="match status" value="1"/>
</dbReference>
<dbReference type="PANTHER" id="PTHR11063:SF8">
    <property type="entry name" value="DELTA-1-PYRROLINE-5-CARBOXYLATE SYNTHASE"/>
    <property type="match status" value="1"/>
</dbReference>
<dbReference type="PANTHER" id="PTHR11063">
    <property type="entry name" value="GLUTAMATE SEMIALDEHYDE DEHYDROGENASE"/>
    <property type="match status" value="1"/>
</dbReference>
<dbReference type="Pfam" id="PF00171">
    <property type="entry name" value="Aldedh"/>
    <property type="match status" value="1"/>
</dbReference>
<dbReference type="PIRSF" id="PIRSF000151">
    <property type="entry name" value="GPR"/>
    <property type="match status" value="1"/>
</dbReference>
<dbReference type="SUPFAM" id="SSF53720">
    <property type="entry name" value="ALDH-like"/>
    <property type="match status" value="1"/>
</dbReference>
<dbReference type="PROSITE" id="PS01223">
    <property type="entry name" value="PROA"/>
    <property type="match status" value="1"/>
</dbReference>
<protein>
    <recommendedName>
        <fullName evidence="1">Gamma-glutamyl phosphate reductase</fullName>
        <shortName evidence="1">GPR</shortName>
        <ecNumber evidence="1">1.2.1.41</ecNumber>
    </recommendedName>
    <alternativeName>
        <fullName evidence="1">Glutamate-5-semialdehyde dehydrogenase</fullName>
    </alternativeName>
    <alternativeName>
        <fullName evidence="1">Glutamyl-gamma-semialdehyde dehydrogenase</fullName>
        <shortName evidence="1">GSA dehydrogenase</shortName>
    </alternativeName>
</protein>
<accession>Q65S49</accession>
<reference key="1">
    <citation type="journal article" date="2004" name="Nat. Biotechnol.">
        <title>The genome sequence of the capnophilic rumen bacterium Mannheimia succiniciproducens.</title>
        <authorList>
            <person name="Hong S.H."/>
            <person name="Kim J.S."/>
            <person name="Lee S.Y."/>
            <person name="In Y.H."/>
            <person name="Choi S.S."/>
            <person name="Rih J.-K."/>
            <person name="Kim C.H."/>
            <person name="Jeong H."/>
            <person name="Hur C.G."/>
            <person name="Kim J.J."/>
        </authorList>
    </citation>
    <scope>NUCLEOTIDE SEQUENCE [LARGE SCALE GENOMIC DNA]</scope>
    <source>
        <strain>KCTC 0769BP / MBEL55E</strain>
    </source>
</reference>
<comment type="function">
    <text evidence="1">Catalyzes the NADPH-dependent reduction of L-glutamate 5-phosphate into L-glutamate 5-semialdehyde and phosphate. The product spontaneously undergoes cyclization to form 1-pyrroline-5-carboxylate.</text>
</comment>
<comment type="catalytic activity">
    <reaction evidence="1">
        <text>L-glutamate 5-semialdehyde + phosphate + NADP(+) = L-glutamyl 5-phosphate + NADPH + H(+)</text>
        <dbReference type="Rhea" id="RHEA:19541"/>
        <dbReference type="ChEBI" id="CHEBI:15378"/>
        <dbReference type="ChEBI" id="CHEBI:43474"/>
        <dbReference type="ChEBI" id="CHEBI:57783"/>
        <dbReference type="ChEBI" id="CHEBI:58066"/>
        <dbReference type="ChEBI" id="CHEBI:58274"/>
        <dbReference type="ChEBI" id="CHEBI:58349"/>
        <dbReference type="EC" id="1.2.1.41"/>
    </reaction>
</comment>
<comment type="pathway">
    <text evidence="1">Amino-acid biosynthesis; L-proline biosynthesis; L-glutamate 5-semialdehyde from L-glutamate: step 2/2.</text>
</comment>
<comment type="subcellular location">
    <subcellularLocation>
        <location evidence="1">Cytoplasm</location>
    </subcellularLocation>
</comment>
<comment type="similarity">
    <text evidence="1">Belongs to the gamma-glutamyl phosphate reductase family.</text>
</comment>
<sequence length="419" mass="45597">MTDLIQMGKQAKQAAFALSQLSQQEKNHALALIAERLEAQQERILAENAKDIQAARENGLSESIIDRLLLTKERLTGIADDVRHVISLADPVGKIIDGGVLDSGLKLERIRTPLGVIGTIYEARPNVTIDVASLCLKTGNAVILRGGKETQHSNKILVEVIQNALQQAGLPEMAVQAITDPDRALVMELLHLDKYVDMIIPRGGAGLQALCRDNSSIPVIVGGIGVCHIFVEQSADQDRSLAVIENAKTQRPSTCNTVETLLVQESIAEEFLPKLARRLKTKEVKFHADSTALSILQGVSADVKPVTEQQLRNEWLTYDLNVVIVKGIEEAVEHIREYGSEHSESILTESQKLANQFVAQVDAAAVYVNASTRFTDGGQFGLGAEVAVSTQKLHARGPMGLEALTTYKWVCVGDYTSRA</sequence>
<gene>
    <name evidence="1" type="primary">proA</name>
    <name type="ordered locus">MS1604</name>
</gene>